<organism>
    <name type="scientific">Pyrococcus abyssi (strain GE5 / Orsay)</name>
    <dbReference type="NCBI Taxonomy" id="272844"/>
    <lineage>
        <taxon>Archaea</taxon>
        <taxon>Methanobacteriati</taxon>
        <taxon>Methanobacteriota</taxon>
        <taxon>Thermococci</taxon>
        <taxon>Thermococcales</taxon>
        <taxon>Thermococcaceae</taxon>
        <taxon>Pyrococcus</taxon>
    </lineage>
</organism>
<gene>
    <name evidence="1" type="primary">ogt</name>
    <name type="ordered locus">PYRAB03900</name>
    <name type="ORF">PAB0260</name>
</gene>
<sequence length="172" mass="19713">MLSCESFKIKGREIIICVIWEEGIQGIVYSLDGREFLEKQLSRLISMLNKRGVSLSLKERHSKYPELVFNVLTGKISNEEGFEELSLEGLTDFEIRVYSWLVKNVKRGEVITYGKVAKELKTSALAIGGAMKRNPYPIVVPCHRVVGKKDPWLYTPKPEYKKFLLEVEGWTS</sequence>
<accession>Q9V1N7</accession>
<accession>G8ZI25</accession>
<name>OGT_PYRAB</name>
<protein>
    <recommendedName>
        <fullName evidence="1">Methylated-DNA--protein-cysteine methyltransferase</fullName>
        <ecNumber evidence="1">2.1.1.63</ecNumber>
    </recommendedName>
    <alternativeName>
        <fullName evidence="1">6-O-methylguanine-DNA methyltransferase</fullName>
        <shortName evidence="1">MGMT</shortName>
    </alternativeName>
    <alternativeName>
        <fullName evidence="1">O-6-methylguanine-DNA-alkyltransferase</fullName>
    </alternativeName>
</protein>
<feature type="chain" id="PRO_0000139381" description="Methylated-DNA--protein-cysteine methyltransferase">
    <location>
        <begin position="1"/>
        <end position="172"/>
    </location>
</feature>
<feature type="active site" description="Nucleophile; methyl group acceptor" evidence="1">
    <location>
        <position position="142"/>
    </location>
</feature>
<proteinExistence type="inferred from homology"/>
<comment type="function">
    <text evidence="1">Involved in the cellular defense against the biological effects of O6-methylguanine (O6-MeG) and O4-methylthymine (O4-MeT) in DNA. Repairs the methylated nucleobase in DNA by stoichiometrically transferring the methyl group to a cysteine residue in the enzyme. This is a suicide reaction: the enzyme is irreversibly inactivated.</text>
</comment>
<comment type="catalytic activity">
    <reaction evidence="1">
        <text>a 6-O-methyl-2'-deoxyguanosine in DNA + L-cysteinyl-[protein] = S-methyl-L-cysteinyl-[protein] + a 2'-deoxyguanosine in DNA</text>
        <dbReference type="Rhea" id="RHEA:24000"/>
        <dbReference type="Rhea" id="RHEA-COMP:10131"/>
        <dbReference type="Rhea" id="RHEA-COMP:10132"/>
        <dbReference type="Rhea" id="RHEA-COMP:11367"/>
        <dbReference type="Rhea" id="RHEA-COMP:11368"/>
        <dbReference type="ChEBI" id="CHEBI:29950"/>
        <dbReference type="ChEBI" id="CHEBI:82612"/>
        <dbReference type="ChEBI" id="CHEBI:85445"/>
        <dbReference type="ChEBI" id="CHEBI:85448"/>
        <dbReference type="EC" id="2.1.1.63"/>
    </reaction>
</comment>
<comment type="catalytic activity">
    <reaction evidence="1">
        <text>a 4-O-methyl-thymidine in DNA + L-cysteinyl-[protein] = a thymidine in DNA + S-methyl-L-cysteinyl-[protein]</text>
        <dbReference type="Rhea" id="RHEA:53428"/>
        <dbReference type="Rhea" id="RHEA-COMP:10131"/>
        <dbReference type="Rhea" id="RHEA-COMP:10132"/>
        <dbReference type="Rhea" id="RHEA-COMP:13555"/>
        <dbReference type="Rhea" id="RHEA-COMP:13556"/>
        <dbReference type="ChEBI" id="CHEBI:29950"/>
        <dbReference type="ChEBI" id="CHEBI:82612"/>
        <dbReference type="ChEBI" id="CHEBI:137386"/>
        <dbReference type="ChEBI" id="CHEBI:137387"/>
        <dbReference type="EC" id="2.1.1.63"/>
    </reaction>
</comment>
<comment type="subcellular location">
    <subcellularLocation>
        <location evidence="1">Cytoplasm</location>
    </subcellularLocation>
</comment>
<comment type="miscellaneous">
    <text evidence="1">This enzyme catalyzes only one turnover and therefore is not strictly catalytic. According to one definition, an enzyme is a biocatalyst that acts repeatedly and over many reaction cycles.</text>
</comment>
<comment type="similarity">
    <text evidence="1">Belongs to the MGMT family.</text>
</comment>
<evidence type="ECO:0000250" key="1">
    <source>
        <dbReference type="UniProtKB" id="O74023"/>
    </source>
</evidence>
<dbReference type="EC" id="2.1.1.63" evidence="1"/>
<dbReference type="EMBL" id="AJ248284">
    <property type="protein sequence ID" value="CAB49312.1"/>
    <property type="molecule type" value="Genomic_DNA"/>
</dbReference>
<dbReference type="EMBL" id="HE613800">
    <property type="protein sequence ID" value="CCE69768.1"/>
    <property type="molecule type" value="Genomic_DNA"/>
</dbReference>
<dbReference type="PIR" id="A75154">
    <property type="entry name" value="A75154"/>
</dbReference>
<dbReference type="RefSeq" id="WP_010867512.1">
    <property type="nucleotide sequence ID" value="NC_000868.1"/>
</dbReference>
<dbReference type="SMR" id="Q9V1N7"/>
<dbReference type="STRING" id="272844.PAB0260"/>
<dbReference type="KEGG" id="pab:PAB0260"/>
<dbReference type="PATRIC" id="fig|272844.11.peg.411"/>
<dbReference type="eggNOG" id="arCOG02724">
    <property type="taxonomic scope" value="Archaea"/>
</dbReference>
<dbReference type="HOGENOM" id="CLU_000445_52_2_2"/>
<dbReference type="OrthoDB" id="372118at2157"/>
<dbReference type="PhylomeDB" id="Q9V1N7"/>
<dbReference type="Proteomes" id="UP000000810">
    <property type="component" value="Chromosome"/>
</dbReference>
<dbReference type="Proteomes" id="UP000009139">
    <property type="component" value="Chromosome"/>
</dbReference>
<dbReference type="GO" id="GO:0005737">
    <property type="term" value="C:cytoplasm"/>
    <property type="evidence" value="ECO:0007669"/>
    <property type="project" value="UniProtKB-SubCell"/>
</dbReference>
<dbReference type="GO" id="GO:0003908">
    <property type="term" value="F:methylated-DNA-[protein]-cysteine S-methyltransferase activity"/>
    <property type="evidence" value="ECO:0007669"/>
    <property type="project" value="UniProtKB-EC"/>
</dbReference>
<dbReference type="GO" id="GO:0006281">
    <property type="term" value="P:DNA repair"/>
    <property type="evidence" value="ECO:0007669"/>
    <property type="project" value="UniProtKB-KW"/>
</dbReference>
<dbReference type="GO" id="GO:0032259">
    <property type="term" value="P:methylation"/>
    <property type="evidence" value="ECO:0007669"/>
    <property type="project" value="UniProtKB-KW"/>
</dbReference>
<dbReference type="CDD" id="cd06445">
    <property type="entry name" value="ATase"/>
    <property type="match status" value="1"/>
</dbReference>
<dbReference type="Gene3D" id="3.30.160.70">
    <property type="entry name" value="Methylated DNA-protein cysteine methyltransferase domain"/>
    <property type="match status" value="1"/>
</dbReference>
<dbReference type="Gene3D" id="1.10.10.10">
    <property type="entry name" value="Winged helix-like DNA-binding domain superfamily/Winged helix DNA-binding domain"/>
    <property type="match status" value="1"/>
</dbReference>
<dbReference type="InterPro" id="IPR054936">
    <property type="entry name" value="DNA_protcyst_Mta_Thcoc"/>
</dbReference>
<dbReference type="InterPro" id="IPR001497">
    <property type="entry name" value="MethylDNA_cys_MeTrfase_AS"/>
</dbReference>
<dbReference type="InterPro" id="IPR014048">
    <property type="entry name" value="MethylDNA_cys_MeTrfase_DNA-bd"/>
</dbReference>
<dbReference type="InterPro" id="IPR036217">
    <property type="entry name" value="MethylDNA_cys_MeTrfase_DNAb"/>
</dbReference>
<dbReference type="InterPro" id="IPR015236">
    <property type="entry name" value="MGMT_N"/>
</dbReference>
<dbReference type="InterPro" id="IPR036631">
    <property type="entry name" value="MGMT_N_sf"/>
</dbReference>
<dbReference type="InterPro" id="IPR036388">
    <property type="entry name" value="WH-like_DNA-bd_sf"/>
</dbReference>
<dbReference type="NCBIfam" id="NF041132">
    <property type="entry name" value="DNA_protcyst_Mta_Thcoc"/>
    <property type="match status" value="1"/>
</dbReference>
<dbReference type="NCBIfam" id="TIGR00589">
    <property type="entry name" value="ogt"/>
    <property type="match status" value="1"/>
</dbReference>
<dbReference type="NCBIfam" id="NF003022">
    <property type="entry name" value="PRK03887.1"/>
    <property type="match status" value="1"/>
</dbReference>
<dbReference type="PANTHER" id="PTHR46460">
    <property type="entry name" value="METHYLATED-DNA--PROTEIN-CYSTEINE METHYLTRANSFERASE"/>
    <property type="match status" value="1"/>
</dbReference>
<dbReference type="PANTHER" id="PTHR46460:SF1">
    <property type="entry name" value="METHYLATED-DNA--PROTEIN-CYSTEINE METHYLTRANSFERASE"/>
    <property type="match status" value="1"/>
</dbReference>
<dbReference type="Pfam" id="PF01035">
    <property type="entry name" value="DNA_binding_1"/>
    <property type="match status" value="1"/>
</dbReference>
<dbReference type="Pfam" id="PF09153">
    <property type="entry name" value="MGMT_N"/>
    <property type="match status" value="1"/>
</dbReference>
<dbReference type="SUPFAM" id="SSF53155">
    <property type="entry name" value="Methylated DNA-protein cysteine methyltransferase domain"/>
    <property type="match status" value="1"/>
</dbReference>
<dbReference type="SUPFAM" id="SSF46767">
    <property type="entry name" value="Methylated DNA-protein cysteine methyltransferase, C-terminal domain"/>
    <property type="match status" value="1"/>
</dbReference>
<dbReference type="PROSITE" id="PS00374">
    <property type="entry name" value="MGMT"/>
    <property type="match status" value="1"/>
</dbReference>
<keyword id="KW-0963">Cytoplasm</keyword>
<keyword id="KW-0227">DNA damage</keyword>
<keyword id="KW-0234">DNA repair</keyword>
<keyword id="KW-0489">Methyltransferase</keyword>
<keyword id="KW-0808">Transferase</keyword>
<reference key="1">
    <citation type="journal article" date="2003" name="Mol. Microbiol.">
        <title>An integrated analysis of the genome of the hyperthermophilic archaeon Pyrococcus abyssi.</title>
        <authorList>
            <person name="Cohen G.N."/>
            <person name="Barbe V."/>
            <person name="Flament D."/>
            <person name="Galperin M."/>
            <person name="Heilig R."/>
            <person name="Lecompte O."/>
            <person name="Poch O."/>
            <person name="Prieur D."/>
            <person name="Querellou J."/>
            <person name="Ripp R."/>
            <person name="Thierry J.-C."/>
            <person name="Van der Oost J."/>
            <person name="Weissenbach J."/>
            <person name="Zivanovic Y."/>
            <person name="Forterre P."/>
        </authorList>
    </citation>
    <scope>NUCLEOTIDE SEQUENCE [LARGE SCALE GENOMIC DNA]</scope>
    <source>
        <strain>GE5 / Orsay</strain>
    </source>
</reference>
<reference key="2">
    <citation type="journal article" date="2012" name="Curr. Microbiol.">
        <title>Re-annotation of two hyperthermophilic archaea Pyrococcus abyssi GE5 and Pyrococcus furiosus DSM 3638.</title>
        <authorList>
            <person name="Gao J."/>
            <person name="Wang J."/>
        </authorList>
    </citation>
    <scope>GENOME REANNOTATION</scope>
    <source>
        <strain>GE5 / Orsay</strain>
    </source>
</reference>